<sequence>MQNLNVGLIGGGFMGKAHSLAYAAMPMFFWPAPALPVRKVIAEANPELAAEAARRFGFENSTSDWRSIIDDPDIHVVDIATPNHLHAEIAIAAAEAGKHIICEKPLARTGEESKAMYDAVKDKNIVHMVAFNYRRTPAVALAKKYIEEGAIGRILSFRGTYLQDWSADPNSPLSWRFQKSIAGSGALGDIATHVIDMARYLVGEFSAVNAVLSTWIPERPLQSGGADALGTVRGGEGPKGPVDVDDEVMTMIRFANGAVGSVEATRNAHGRNNYITFEIHGTEGSIVFNYERRDELQVAFASDQADRRGFRTVYTGPAHPYGEGLWPIPALGIGYGETKIIEAHDFFKAIAEGGSVSPSFADGYQVALIDDAIVESAAKESWVDVPQISA</sequence>
<feature type="chain" id="PRO_0000458179" description="Levoglucosan dehydrogenase">
    <location>
        <begin position="1"/>
        <end position="390"/>
    </location>
</feature>
<feature type="binding site" evidence="1 7">
    <location>
        <position position="13"/>
    </location>
    <ligand>
        <name>NADH</name>
        <dbReference type="ChEBI" id="CHEBI:57945"/>
    </ligand>
</feature>
<feature type="binding site" evidence="1 7">
    <location>
        <position position="14"/>
    </location>
    <ligand>
        <name>NADH</name>
        <dbReference type="ChEBI" id="CHEBI:57945"/>
    </ligand>
</feature>
<feature type="binding site" evidence="1 7">
    <location>
        <position position="43"/>
    </location>
    <ligand>
        <name>NADH</name>
        <dbReference type="ChEBI" id="CHEBI:57945"/>
    </ligand>
</feature>
<feature type="binding site" evidence="1 7">
    <location>
        <position position="81"/>
    </location>
    <ligand>
        <name>NADH</name>
        <dbReference type="ChEBI" id="CHEBI:57945"/>
    </ligand>
</feature>
<feature type="binding site" evidence="1 7">
    <location>
        <position position="83"/>
    </location>
    <ligand>
        <name>NADH</name>
        <dbReference type="ChEBI" id="CHEBI:57945"/>
    </ligand>
</feature>
<feature type="binding site" evidence="1 7">
    <location>
        <position position="86"/>
    </location>
    <ligand>
        <name>NADH</name>
        <dbReference type="ChEBI" id="CHEBI:57945"/>
    </ligand>
</feature>
<feature type="binding site" evidence="1 7">
    <location>
        <position position="103"/>
    </location>
    <ligand>
        <name>NADH</name>
        <dbReference type="ChEBI" id="CHEBI:57945"/>
    </ligand>
</feature>
<feature type="binding site" evidence="1 8">
    <location>
        <position position="104"/>
    </location>
    <ligand>
        <name>levoglucosan</name>
        <dbReference type="ChEBI" id="CHEBI:30997"/>
    </ligand>
</feature>
<feature type="binding site" evidence="1 7">
    <location>
        <position position="104"/>
    </location>
    <ligand>
        <name>NADH</name>
        <dbReference type="ChEBI" id="CHEBI:57945"/>
    </ligand>
</feature>
<feature type="binding site" evidence="1 7">
    <location>
        <position position="130"/>
    </location>
    <ligand>
        <name>NADH</name>
        <dbReference type="ChEBI" id="CHEBI:57945"/>
    </ligand>
</feature>
<feature type="binding site" evidence="1 7">
    <location>
        <position position="132"/>
    </location>
    <ligand>
        <name>NADH</name>
        <dbReference type="ChEBI" id="CHEBI:57945"/>
    </ligand>
</feature>
<feature type="binding site" evidence="1 8">
    <location>
        <position position="133"/>
    </location>
    <ligand>
        <name>levoglucosan</name>
        <dbReference type="ChEBI" id="CHEBI:30997"/>
    </ligand>
</feature>
<feature type="binding site" evidence="1 8">
    <location>
        <position position="163"/>
    </location>
    <ligand>
        <name>levoglucosan</name>
        <dbReference type="ChEBI" id="CHEBI:30997"/>
    </ligand>
</feature>
<feature type="binding site" evidence="1 7">
    <location>
        <position position="175"/>
    </location>
    <ligand>
        <name>NADH</name>
        <dbReference type="ChEBI" id="CHEBI:57945"/>
    </ligand>
</feature>
<feature type="binding site" evidence="1 8">
    <location>
        <position position="176"/>
    </location>
    <ligand>
        <name>levoglucosan</name>
        <dbReference type="ChEBI" id="CHEBI:30997"/>
    </ligand>
</feature>
<feature type="binding site" evidence="1 7">
    <location>
        <position position="176"/>
    </location>
    <ligand>
        <name>NADH</name>
        <dbReference type="ChEBI" id="CHEBI:57945"/>
    </ligand>
</feature>
<feature type="binding site" evidence="1 8">
    <location>
        <position position="189"/>
    </location>
    <ligand>
        <name>levoglucosan</name>
        <dbReference type="ChEBI" id="CHEBI:30997"/>
    </ligand>
</feature>
<feature type="binding site" evidence="1 8">
    <location>
        <position position="193"/>
    </location>
    <ligand>
        <name>levoglucosan</name>
        <dbReference type="ChEBI" id="CHEBI:30997"/>
    </ligand>
</feature>
<feature type="binding site" evidence="1 7">
    <location>
        <position position="335"/>
    </location>
    <ligand>
        <name>NADH</name>
        <dbReference type="ChEBI" id="CHEBI:57945"/>
    </ligand>
</feature>
<feature type="strand" evidence="10">
    <location>
        <begin position="3"/>
        <end position="9"/>
    </location>
</feature>
<feature type="helix" evidence="10">
    <location>
        <begin position="12"/>
        <end position="14"/>
    </location>
</feature>
<feature type="helix" evidence="10">
    <location>
        <begin position="15"/>
        <end position="28"/>
    </location>
</feature>
<feature type="strand" evidence="10">
    <location>
        <begin position="29"/>
        <end position="31"/>
    </location>
</feature>
<feature type="strand" evidence="10">
    <location>
        <begin position="33"/>
        <end position="42"/>
    </location>
</feature>
<feature type="helix" evidence="10">
    <location>
        <begin position="46"/>
        <end position="56"/>
    </location>
</feature>
<feature type="strand" evidence="10">
    <location>
        <begin position="59"/>
        <end position="63"/>
    </location>
</feature>
<feature type="helix" evidence="10">
    <location>
        <begin position="65"/>
        <end position="69"/>
    </location>
</feature>
<feature type="strand" evidence="10">
    <location>
        <begin position="76"/>
        <end position="79"/>
    </location>
</feature>
<feature type="turn" evidence="10">
    <location>
        <begin position="83"/>
        <end position="85"/>
    </location>
</feature>
<feature type="helix" evidence="10">
    <location>
        <begin position="86"/>
        <end position="95"/>
    </location>
</feature>
<feature type="strand" evidence="10">
    <location>
        <begin position="99"/>
        <end position="102"/>
    </location>
</feature>
<feature type="strand" evidence="10">
    <location>
        <begin position="104"/>
        <end position="109"/>
    </location>
</feature>
<feature type="helix" evidence="10">
    <location>
        <begin position="110"/>
        <end position="120"/>
    </location>
</feature>
<feature type="strand" evidence="11">
    <location>
        <begin position="123"/>
        <end position="125"/>
    </location>
</feature>
<feature type="strand" evidence="10">
    <location>
        <begin position="127"/>
        <end position="129"/>
    </location>
</feature>
<feature type="helix" evidence="10">
    <location>
        <begin position="132"/>
        <end position="135"/>
    </location>
</feature>
<feature type="helix" evidence="10">
    <location>
        <begin position="137"/>
        <end position="147"/>
    </location>
</feature>
<feature type="turn" evidence="10">
    <location>
        <begin position="148"/>
        <end position="151"/>
    </location>
</feature>
<feature type="strand" evidence="10">
    <location>
        <begin position="153"/>
        <end position="162"/>
    </location>
</feature>
<feature type="helix" evidence="10">
    <location>
        <begin position="175"/>
        <end position="177"/>
    </location>
</feature>
<feature type="helix" evidence="10">
    <location>
        <begin position="179"/>
        <end position="182"/>
    </location>
</feature>
<feature type="strand" evidence="10">
    <location>
        <begin position="183"/>
        <end position="185"/>
    </location>
</feature>
<feature type="helix" evidence="10">
    <location>
        <begin position="186"/>
        <end position="189"/>
    </location>
</feature>
<feature type="helix" evidence="10">
    <location>
        <begin position="191"/>
        <end position="201"/>
    </location>
</feature>
<feature type="strand" evidence="10">
    <location>
        <begin position="205"/>
        <end position="213"/>
    </location>
</feature>
<feature type="strand" evidence="10">
    <location>
        <begin position="218"/>
        <end position="220"/>
    </location>
</feature>
<feature type="strand" evidence="10">
    <location>
        <begin position="237"/>
        <end position="241"/>
    </location>
</feature>
<feature type="strand" evidence="10">
    <location>
        <begin position="246"/>
        <end position="254"/>
    </location>
</feature>
<feature type="strand" evidence="10">
    <location>
        <begin position="259"/>
        <end position="266"/>
    </location>
</feature>
<feature type="strand" evidence="10">
    <location>
        <begin position="272"/>
        <end position="289"/>
    </location>
</feature>
<feature type="helix" evidence="10">
    <location>
        <begin position="290"/>
        <end position="292"/>
    </location>
</feature>
<feature type="strand" evidence="10">
    <location>
        <begin position="295"/>
        <end position="300"/>
    </location>
</feature>
<feature type="helix" evidence="10">
    <location>
        <begin position="305"/>
        <end position="307"/>
    </location>
</feature>
<feature type="strand" evidence="10">
    <location>
        <begin position="309"/>
        <end position="314"/>
    </location>
</feature>
<feature type="helix" evidence="10">
    <location>
        <begin position="322"/>
        <end position="324"/>
    </location>
</feature>
<feature type="helix" evidence="10">
    <location>
        <begin position="335"/>
        <end position="352"/>
    </location>
</feature>
<feature type="helix" evidence="10">
    <location>
        <begin position="360"/>
        <end position="379"/>
    </location>
</feature>
<name>LGDH_PSEPM</name>
<protein>
    <recommendedName>
        <fullName evidence="2">Levoglucosan dehydrogenase</fullName>
        <shortName evidence="2">LGDH</shortName>
        <ecNumber evidence="1">1.1.1.425</ecNumber>
    </recommendedName>
    <alternativeName>
        <fullName evidence="3">1,6-anhydro-beta-D-glucose dehydrogenase</fullName>
    </alternativeName>
    <alternativeName>
        <fullName evidence="2">PpLGDH</fullName>
    </alternativeName>
</protein>
<evidence type="ECO:0000269" key="1">
    <source>
    </source>
</evidence>
<evidence type="ECO:0000303" key="2">
    <source>
    </source>
</evidence>
<evidence type="ECO:0000305" key="3"/>
<evidence type="ECO:0000305" key="4">
    <source>
    </source>
</evidence>
<evidence type="ECO:0000312" key="5">
    <source>
        <dbReference type="EMBL" id="ADX72256.1"/>
    </source>
</evidence>
<evidence type="ECO:0007744" key="6">
    <source>
        <dbReference type="PDB" id="6A3F"/>
    </source>
</evidence>
<evidence type="ECO:0007744" key="7">
    <source>
        <dbReference type="PDB" id="6A3G"/>
    </source>
</evidence>
<evidence type="ECO:0007744" key="8">
    <source>
        <dbReference type="PDB" id="6A3I"/>
    </source>
</evidence>
<evidence type="ECO:0007744" key="9">
    <source>
        <dbReference type="PDB" id="6A3J"/>
    </source>
</evidence>
<evidence type="ECO:0007829" key="10">
    <source>
        <dbReference type="PDB" id="6A3F"/>
    </source>
</evidence>
<evidence type="ECO:0007829" key="11">
    <source>
        <dbReference type="PDB" id="6A3G"/>
    </source>
</evidence>
<accession>F0M433</accession>
<comment type="function">
    <text evidence="1">Catalyzes the oxidation of levoglucosan (1,6-anhydro-beta-D-glucose, LG) to 3-dehydrolevoglucosan (3-keto-LG) (PubMed:30224354). Exhibits high substrate specificity toward levoglucosan and NAD(+) for the oxidative reaction (PubMed:30224354). Exhibits weak activities (about 4% compared with that of LG) toward L-sorbose and 1,5-anhydro-D-glucitol, and activity toward D-xylose is also detectable (1.7%) (PubMed:30224354). Can also efficiently catalyzes the NADH-dependent reduction (reverse reaction) of 3-keto-LG (PubMed:30224354).</text>
</comment>
<comment type="catalytic activity">
    <reaction evidence="1">
        <text>levoglucosan + NAD(+) = 3-dehydrolevoglucosan + NADH + H(+)</text>
        <dbReference type="Rhea" id="RHEA:62392"/>
        <dbReference type="ChEBI" id="CHEBI:15378"/>
        <dbReference type="ChEBI" id="CHEBI:30997"/>
        <dbReference type="ChEBI" id="CHEBI:57540"/>
        <dbReference type="ChEBI" id="CHEBI:57945"/>
        <dbReference type="ChEBI" id="CHEBI:144894"/>
        <dbReference type="EC" id="1.1.1.425"/>
    </reaction>
    <physiologicalReaction direction="left-to-right" evidence="4">
        <dbReference type="Rhea" id="RHEA:62393"/>
    </physiologicalReaction>
</comment>
<comment type="biophysicochemical properties">
    <kinetics>
        <KM evidence="1">7.5 mM for levoglucosan (at pH 8.5 and 40 degrees Celsius)</KM>
        <KM evidence="1">0.34 mM for NAD(+) (at pH 9.0 and 40 degrees Celsius)</KM>
        <KM evidence="1">0.48 mM for 3-dehydrolevoglucosan (at pH 7.0 and 40 degrees Celsius)</KM>
        <text evidence="1">kcat is 4.3 sec(-1) with levoglucosan as substrate. kcat is 26 sec(-1) with 3-dehydrolevoglucosan as substrate.</text>
    </kinetics>
    <phDependence>
        <text evidence="1">Stable in a pH range between 5.0 and 8.5 at 40 degrees Celsius for 30 min.</text>
    </phDependence>
    <temperatureDependence>
        <text evidence="1">Optimum temperature is 60 degrees Celsius.</text>
    </temperatureDependence>
</comment>
<comment type="subunit">
    <text evidence="1">Homotetramer.</text>
</comment>
<comment type="domain">
    <text evidence="1">Contains an N-terminal nucleotide-binding domain and a C-terminal substrate-binding alpha/beta domain.</text>
</comment>
<comment type="similarity">
    <text evidence="3">Belongs to the Gfo/Idh/MocA family.</text>
</comment>
<organism>
    <name type="scientific">Pseudarthrobacter phenanthrenivorans (strain DSM 18606 / JCM 16027 / LMG 23796 / Sphe3)</name>
    <name type="common">Arthrobacter phenanthrenivorans</name>
    <dbReference type="NCBI Taxonomy" id="930171"/>
    <lineage>
        <taxon>Bacteria</taxon>
        <taxon>Bacillati</taxon>
        <taxon>Actinomycetota</taxon>
        <taxon>Actinomycetes</taxon>
        <taxon>Micrococcales</taxon>
        <taxon>Micrococcaceae</taxon>
        <taxon>Pseudarthrobacter</taxon>
    </lineage>
</organism>
<gene>
    <name evidence="2" type="primary">lgdh</name>
    <name evidence="5" type="ordered locus">Asphe3_10730</name>
</gene>
<keyword id="KW-0002">3D-structure</keyword>
<keyword id="KW-0119">Carbohydrate metabolism</keyword>
<keyword id="KW-0520">NAD</keyword>
<keyword id="KW-0547">Nucleotide-binding</keyword>
<keyword id="KW-0560">Oxidoreductase</keyword>
<dbReference type="EC" id="1.1.1.425" evidence="1"/>
<dbReference type="EMBL" id="CP002379">
    <property type="protein sequence ID" value="ADX72256.1"/>
    <property type="molecule type" value="Genomic_DNA"/>
</dbReference>
<dbReference type="RefSeq" id="WP_013600196.1">
    <property type="nucleotide sequence ID" value="NC_015145.1"/>
</dbReference>
<dbReference type="PDB" id="6A3F">
    <property type="method" value="X-ray"/>
    <property type="resolution" value="1.80 A"/>
    <property type="chains" value="A/B=1-390"/>
</dbReference>
<dbReference type="PDB" id="6A3G">
    <property type="method" value="X-ray"/>
    <property type="resolution" value="1.90 A"/>
    <property type="chains" value="A/B/C/D=1-390"/>
</dbReference>
<dbReference type="PDB" id="6A3I">
    <property type="method" value="X-ray"/>
    <property type="resolution" value="2.41 A"/>
    <property type="chains" value="A/B/C/D=1-390"/>
</dbReference>
<dbReference type="PDB" id="6A3J">
    <property type="method" value="X-ray"/>
    <property type="resolution" value="1.90 A"/>
    <property type="chains" value="A/B/C/D=1-390"/>
</dbReference>
<dbReference type="PDBsum" id="6A3F"/>
<dbReference type="PDBsum" id="6A3G"/>
<dbReference type="PDBsum" id="6A3I"/>
<dbReference type="PDBsum" id="6A3J"/>
<dbReference type="SMR" id="F0M433"/>
<dbReference type="STRING" id="930171.Asphe3_10730"/>
<dbReference type="KEGG" id="apn:Asphe3_10730"/>
<dbReference type="eggNOG" id="COG0673">
    <property type="taxonomic scope" value="Bacteria"/>
</dbReference>
<dbReference type="HOGENOM" id="CLU_023194_17_0_11"/>
<dbReference type="OrthoDB" id="9792085at2"/>
<dbReference type="BioCyc" id="MetaCyc:MONOMER-20974"/>
<dbReference type="BRENDA" id="1.1.1.425">
    <property type="organism ID" value="13373"/>
</dbReference>
<dbReference type="Proteomes" id="UP000008639">
    <property type="component" value="Chromosome"/>
</dbReference>
<dbReference type="GO" id="GO:0000166">
    <property type="term" value="F:nucleotide binding"/>
    <property type="evidence" value="ECO:0007669"/>
    <property type="project" value="UniProtKB-KW"/>
</dbReference>
<dbReference type="GO" id="GO:0016491">
    <property type="term" value="F:oxidoreductase activity"/>
    <property type="evidence" value="ECO:0007669"/>
    <property type="project" value="UniProtKB-KW"/>
</dbReference>
<dbReference type="Gene3D" id="3.30.360.10">
    <property type="entry name" value="Dihydrodipicolinate Reductase, domain 2"/>
    <property type="match status" value="1"/>
</dbReference>
<dbReference type="Gene3D" id="3.40.50.720">
    <property type="entry name" value="NAD(P)-binding Rossmann-like Domain"/>
    <property type="match status" value="1"/>
</dbReference>
<dbReference type="InterPro" id="IPR000683">
    <property type="entry name" value="Gfo/Idh/MocA-like_OxRdtase_N"/>
</dbReference>
<dbReference type="InterPro" id="IPR050463">
    <property type="entry name" value="Gfo/Idh/MocA_oxidrdct_glycsds"/>
</dbReference>
<dbReference type="InterPro" id="IPR055170">
    <property type="entry name" value="GFO_IDH_MocA-like_dom"/>
</dbReference>
<dbReference type="InterPro" id="IPR036291">
    <property type="entry name" value="NAD(P)-bd_dom_sf"/>
</dbReference>
<dbReference type="PANTHER" id="PTHR43818">
    <property type="entry name" value="BCDNA.GH03377"/>
    <property type="match status" value="1"/>
</dbReference>
<dbReference type="PANTHER" id="PTHR43818:SF11">
    <property type="entry name" value="BCDNA.GH03377"/>
    <property type="match status" value="1"/>
</dbReference>
<dbReference type="Pfam" id="PF01408">
    <property type="entry name" value="GFO_IDH_MocA"/>
    <property type="match status" value="1"/>
</dbReference>
<dbReference type="Pfam" id="PF22725">
    <property type="entry name" value="GFO_IDH_MocA_C3"/>
    <property type="match status" value="1"/>
</dbReference>
<dbReference type="SUPFAM" id="SSF55347">
    <property type="entry name" value="Glyceraldehyde-3-phosphate dehydrogenase-like, C-terminal domain"/>
    <property type="match status" value="1"/>
</dbReference>
<dbReference type="SUPFAM" id="SSF51735">
    <property type="entry name" value="NAD(P)-binding Rossmann-fold domains"/>
    <property type="match status" value="1"/>
</dbReference>
<reference key="1">
    <citation type="journal article" date="2011" name="Stand. Genomic Sci.">
        <title>Complete genome sequence of Arthrobacter phenanthrenivorans type strain (Sphe3).</title>
        <authorList>
            <person name="Kallimanis A."/>
            <person name="Labutti K.M."/>
            <person name="Lapidus A."/>
            <person name="Clum A."/>
            <person name="Lykidis A."/>
            <person name="Mavromatis K."/>
            <person name="Pagani I."/>
            <person name="Liolios K."/>
            <person name="Ivanova N."/>
            <person name="Goodwin L."/>
            <person name="Pitluck S."/>
            <person name="Chen A."/>
            <person name="Palaniappan K."/>
            <person name="Markowitz V."/>
            <person name="Bristow J."/>
            <person name="Velentzas A.D."/>
            <person name="Perisynakis A."/>
            <person name="Ouzounis C.C."/>
            <person name="Kyrpides N.C."/>
            <person name="Koukkou A.I."/>
            <person name="Drainas C."/>
        </authorList>
    </citation>
    <scope>NUCLEOTIDE SEQUENCE [LARGE SCALE GENOMIC DNA]</scope>
    <source>
        <strain>DSM 18606 / JCM 16027 / LMG 23796 / Sphe3</strain>
    </source>
</reference>
<reference evidence="6 7 8 9" key="2">
    <citation type="journal article" date="2018" name="J. Biol. Chem.">
        <title>Identification, functional characterization, and crystal structure determination of bacterial levoglucosan dehydrogenase.</title>
        <authorList>
            <person name="Sugiura M."/>
            <person name="Nakahara M."/>
            <person name="Yamada C."/>
            <person name="Arakawa T."/>
            <person name="Kitaoka M."/>
            <person name="Fushinobu S."/>
        </authorList>
    </citation>
    <scope>X-RAY CRYSTALLOGRAPHY (1.80 ANGSTROMS) IN COMPLEXES WITH NADH; LEVOGLUCOSAN AND L-SORBOSE</scope>
    <scope>FUNCTION</scope>
    <scope>CATALYTIC ACTIVITY</scope>
    <scope>BIOPHYSICOCHEMICAL PROPERTIES</scope>
    <scope>SUBUNIT</scope>
    <scope>DOMAIN</scope>
    <source>
        <strain>DSM 18606 / JCM 16027 / LMG 23796 / Sphe3</strain>
    </source>
</reference>
<proteinExistence type="evidence at protein level"/>